<comment type="function">
    <text evidence="1 2 3 6">Endothelins are endothelium-derived vasoconstrictor peptides (By similarity). Probable ligand for G-protein coupled receptors EDNRA and EDNRB which activates PTK2B, BCAR1, BCAR3 and, GTPases RAP1 and RHOA cascade in glomerular mesangial cells (By similarity). Also binds the DEAR/FBXW7-AS1 receptor (PubMed:9508787). Promotes mesenteric arterial wall remodeling via activation of ROCK signaling and subsequent colocalization of NFATC3 with F-actin filaments (By similarity). NFATC3 then translocates to the nucleus where it subsequently promotes the transcription of the smooth muscle hypertrophy and differentiation marker ACTA2 (By similarity).</text>
</comment>
<comment type="subcellular location">
    <subcellularLocation>
        <location>Secreted</location>
    </subcellularLocation>
</comment>
<comment type="similarity">
    <text evidence="7">Belongs to the endothelin/sarafotoxin family.</text>
</comment>
<evidence type="ECO:0000250" key="1">
    <source>
        <dbReference type="UniProtKB" id="P05305"/>
    </source>
</evidence>
<evidence type="ECO:0000250" key="2">
    <source>
        <dbReference type="UniProtKB" id="P09558"/>
    </source>
</evidence>
<evidence type="ECO:0000250" key="3">
    <source>
        <dbReference type="UniProtKB" id="P22387"/>
    </source>
</evidence>
<evidence type="ECO:0000256" key="4">
    <source>
        <dbReference type="SAM" id="MobiDB-lite"/>
    </source>
</evidence>
<evidence type="ECO:0000269" key="5">
    <source>
    </source>
</evidence>
<evidence type="ECO:0000269" key="6">
    <source>
    </source>
</evidence>
<evidence type="ECO:0000305" key="7"/>
<evidence type="ECO:0007829" key="8">
    <source>
        <dbReference type="PDB" id="3CMH"/>
    </source>
</evidence>
<evidence type="ECO:0007829" key="9">
    <source>
        <dbReference type="PDB" id="6CMH"/>
    </source>
</evidence>
<accession>P22388</accession>
<protein>
    <recommendedName>
        <fullName>Endothelin-1</fullName>
        <shortName>ET-1</shortName>
    </recommendedName>
    <alternativeName>
        <fullName>Preproendothelin-1</fullName>
        <shortName>PPET1</shortName>
    </alternativeName>
    <component>
        <recommendedName>
            <fullName>Big endothelin-1</fullName>
        </recommendedName>
    </component>
</protein>
<keyword id="KW-0002">3D-structure</keyword>
<keyword id="KW-0165">Cleavage on pair of basic residues</keyword>
<keyword id="KW-1015">Disulfide bond</keyword>
<keyword id="KW-1185">Reference proteome</keyword>
<keyword id="KW-0964">Secreted</keyword>
<keyword id="KW-0732">Signal</keyword>
<keyword id="KW-0838">Vasoactive</keyword>
<keyword id="KW-0839">Vasoconstrictor</keyword>
<organism>
    <name type="scientific">Rattus norvegicus</name>
    <name type="common">Rat</name>
    <dbReference type="NCBI Taxonomy" id="10116"/>
    <lineage>
        <taxon>Eukaryota</taxon>
        <taxon>Metazoa</taxon>
        <taxon>Chordata</taxon>
        <taxon>Craniata</taxon>
        <taxon>Vertebrata</taxon>
        <taxon>Euteleostomi</taxon>
        <taxon>Mammalia</taxon>
        <taxon>Eutheria</taxon>
        <taxon>Euarchontoglires</taxon>
        <taxon>Glires</taxon>
        <taxon>Rodentia</taxon>
        <taxon>Myomorpha</taxon>
        <taxon>Muroidea</taxon>
        <taxon>Muridae</taxon>
        <taxon>Murinae</taxon>
        <taxon>Rattus</taxon>
    </lineage>
</organism>
<feature type="signal peptide" evidence="5">
    <location>
        <begin position="1"/>
        <end position="25"/>
    </location>
</feature>
<feature type="propeptide" id="PRO_0000008072" evidence="5">
    <location>
        <begin position="26"/>
        <end position="50"/>
    </location>
</feature>
<feature type="peptide" id="PRO_0000436399" description="Big endothelin-1" evidence="5">
    <location>
        <begin position="53"/>
        <end position="91"/>
    </location>
</feature>
<feature type="peptide" id="PRO_0000008073" description="Endothelin-1">
    <location>
        <begin position="53"/>
        <end position="73"/>
    </location>
</feature>
<feature type="propeptide" id="PRO_0000008074">
    <location>
        <begin position="74"/>
        <end position="202"/>
    </location>
</feature>
<feature type="region of interest" description="Disordered" evidence="4">
    <location>
        <begin position="28"/>
        <end position="47"/>
    </location>
</feature>
<feature type="region of interest" description="Endothelin-like">
    <location>
        <begin position="110"/>
        <end position="124"/>
    </location>
</feature>
<feature type="site" description="Cleavage; by KEL" evidence="1">
    <location>
        <begin position="73"/>
        <end position="74"/>
    </location>
</feature>
<feature type="disulfide bond" evidence="1">
    <location>
        <begin position="53"/>
        <end position="67"/>
    </location>
</feature>
<feature type="disulfide bond" evidence="1">
    <location>
        <begin position="55"/>
        <end position="63"/>
    </location>
</feature>
<feature type="helix" evidence="9">
    <location>
        <begin position="54"/>
        <end position="57"/>
    </location>
</feature>
<feature type="helix" evidence="8">
    <location>
        <begin position="61"/>
        <end position="69"/>
    </location>
</feature>
<dbReference type="EMBL" id="M64711">
    <property type="protein sequence ID" value="AAA41129.1"/>
    <property type="molecule type" value="mRNA"/>
</dbReference>
<dbReference type="PIR" id="JN0125">
    <property type="entry name" value="JN0125"/>
</dbReference>
<dbReference type="RefSeq" id="NP_036680.1">
    <property type="nucleotide sequence ID" value="NM_012548.2"/>
</dbReference>
<dbReference type="RefSeq" id="XP_017455942.1">
    <property type="nucleotide sequence ID" value="XM_017600453.1"/>
</dbReference>
<dbReference type="PDB" id="3CMH">
    <property type="method" value="NMR"/>
    <property type="chains" value="A=60-73"/>
</dbReference>
<dbReference type="PDB" id="6CMH">
    <property type="method" value="NMR"/>
    <property type="chains" value="A=53-73"/>
</dbReference>
<dbReference type="PDBsum" id="3CMH"/>
<dbReference type="PDBsum" id="6CMH"/>
<dbReference type="SMR" id="P22388"/>
<dbReference type="FunCoup" id="P22388">
    <property type="interactions" value="288"/>
</dbReference>
<dbReference type="STRING" id="10116.ENSRNOP00000019361"/>
<dbReference type="PhosphoSitePlus" id="P22388"/>
<dbReference type="PaxDb" id="10116-ENSRNOP00000019361"/>
<dbReference type="Ensembl" id="ENSRNOT00000019361.3">
    <property type="protein sequence ID" value="ENSRNOP00000019361.1"/>
    <property type="gene ID" value="ENSRNOG00000014361.3"/>
</dbReference>
<dbReference type="GeneID" id="24323"/>
<dbReference type="KEGG" id="rno:24323"/>
<dbReference type="UCSC" id="RGD:2532">
    <property type="organism name" value="rat"/>
</dbReference>
<dbReference type="AGR" id="RGD:2532"/>
<dbReference type="CTD" id="1906"/>
<dbReference type="RGD" id="2532">
    <property type="gene designation" value="Edn1"/>
</dbReference>
<dbReference type="eggNOG" id="ENOG502S1NV">
    <property type="taxonomic scope" value="Eukaryota"/>
</dbReference>
<dbReference type="GeneTree" id="ENSGT00950000183053"/>
<dbReference type="HOGENOM" id="CLU_090013_1_0_1"/>
<dbReference type="InParanoid" id="P22388"/>
<dbReference type="OMA" id="TDHRNRC"/>
<dbReference type="OrthoDB" id="8873756at2759"/>
<dbReference type="PhylomeDB" id="P22388"/>
<dbReference type="TreeFam" id="TF333184"/>
<dbReference type="Reactome" id="R-RNO-375276">
    <property type="pathway name" value="Peptide ligand-binding receptors"/>
</dbReference>
<dbReference type="Reactome" id="R-RNO-416476">
    <property type="pathway name" value="G alpha (q) signalling events"/>
</dbReference>
<dbReference type="EvolutionaryTrace" id="P22388"/>
<dbReference type="PRO" id="PR:P22388"/>
<dbReference type="Proteomes" id="UP000002494">
    <property type="component" value="Chromosome 17"/>
</dbReference>
<dbReference type="Bgee" id="ENSRNOG00000014361">
    <property type="expression patterns" value="Expressed in lung and 18 other cell types or tissues"/>
</dbReference>
<dbReference type="GO" id="GO:0045178">
    <property type="term" value="C:basal part of cell"/>
    <property type="evidence" value="ECO:0000314"/>
    <property type="project" value="RGD"/>
</dbReference>
<dbReference type="GO" id="GO:0005737">
    <property type="term" value="C:cytoplasm"/>
    <property type="evidence" value="ECO:0000266"/>
    <property type="project" value="RGD"/>
</dbReference>
<dbReference type="GO" id="GO:0005615">
    <property type="term" value="C:extracellular space"/>
    <property type="evidence" value="ECO:0000314"/>
    <property type="project" value="RGD"/>
</dbReference>
<dbReference type="GO" id="GO:0048237">
    <property type="term" value="C:rough endoplasmic reticulum lumen"/>
    <property type="evidence" value="ECO:0000314"/>
    <property type="project" value="RGD"/>
</dbReference>
<dbReference type="GO" id="GO:0033093">
    <property type="term" value="C:Weibel-Palade body"/>
    <property type="evidence" value="ECO:0000314"/>
    <property type="project" value="RGD"/>
</dbReference>
<dbReference type="GO" id="GO:0005125">
    <property type="term" value="F:cytokine activity"/>
    <property type="evidence" value="ECO:0000266"/>
    <property type="project" value="RGD"/>
</dbReference>
<dbReference type="GO" id="GO:0031707">
    <property type="term" value="F:endothelin A receptor binding"/>
    <property type="evidence" value="ECO:0000315"/>
    <property type="project" value="RGD"/>
</dbReference>
<dbReference type="GO" id="GO:0031708">
    <property type="term" value="F:endothelin B receptor binding"/>
    <property type="evidence" value="ECO:0000315"/>
    <property type="project" value="RGD"/>
</dbReference>
<dbReference type="GO" id="GO:0005179">
    <property type="term" value="F:hormone activity"/>
    <property type="evidence" value="ECO:0000266"/>
    <property type="project" value="RGD"/>
</dbReference>
<dbReference type="GO" id="GO:0048018">
    <property type="term" value="F:receptor ligand activity"/>
    <property type="evidence" value="ECO:0000266"/>
    <property type="project" value="RGD"/>
</dbReference>
<dbReference type="GO" id="GO:0005102">
    <property type="term" value="F:signaling receptor binding"/>
    <property type="evidence" value="ECO:0000266"/>
    <property type="project" value="RGD"/>
</dbReference>
<dbReference type="GO" id="GO:0007193">
    <property type="term" value="P:adenylate cyclase-inhibiting G protein-coupled receptor signaling pathway"/>
    <property type="evidence" value="ECO:0000266"/>
    <property type="project" value="RGD"/>
</dbReference>
<dbReference type="GO" id="GO:0014824">
    <property type="term" value="P:artery smooth muscle contraction"/>
    <property type="evidence" value="ECO:0000314"/>
    <property type="project" value="RGD"/>
</dbReference>
<dbReference type="GO" id="GO:0048675">
    <property type="term" value="P:axon extension"/>
    <property type="evidence" value="ECO:0000266"/>
    <property type="project" value="RGD"/>
</dbReference>
<dbReference type="GO" id="GO:0007411">
    <property type="term" value="P:axon guidance"/>
    <property type="evidence" value="ECO:0000266"/>
    <property type="project" value="RGD"/>
</dbReference>
<dbReference type="GO" id="GO:0060385">
    <property type="term" value="P:axonogenesis involved in innervation"/>
    <property type="evidence" value="ECO:0000266"/>
    <property type="project" value="RGD"/>
</dbReference>
<dbReference type="GO" id="GO:0048514">
    <property type="term" value="P:blood vessel morphogenesis"/>
    <property type="evidence" value="ECO:0000266"/>
    <property type="project" value="RGD"/>
</dbReference>
<dbReference type="GO" id="GO:0007589">
    <property type="term" value="P:body fluid secretion"/>
    <property type="evidence" value="ECO:0000266"/>
    <property type="project" value="RGD"/>
</dbReference>
<dbReference type="GO" id="GO:0001569">
    <property type="term" value="P:branching involved in blood vessel morphogenesis"/>
    <property type="evidence" value="ECO:0000266"/>
    <property type="project" value="RGD"/>
</dbReference>
<dbReference type="GO" id="GO:0070588">
    <property type="term" value="P:calcium ion transmembrane transport"/>
    <property type="evidence" value="ECO:0000266"/>
    <property type="project" value="RGD"/>
</dbReference>
<dbReference type="GO" id="GO:0019722">
    <property type="term" value="P:calcium-mediated signaling"/>
    <property type="evidence" value="ECO:0000266"/>
    <property type="project" value="RGD"/>
</dbReference>
<dbReference type="GO" id="GO:0141156">
    <property type="term" value="P:cAMP/PKA signal transduction"/>
    <property type="evidence" value="ECO:0000266"/>
    <property type="project" value="RGD"/>
</dbReference>
<dbReference type="GO" id="GO:0060070">
    <property type="term" value="P:canonical Wnt signaling pathway"/>
    <property type="evidence" value="ECO:0000266"/>
    <property type="project" value="RGD"/>
</dbReference>
<dbReference type="GO" id="GO:0003253">
    <property type="term" value="P:cardiac neural crest cell migration involved in outflow tract morphogenesis"/>
    <property type="evidence" value="ECO:0000266"/>
    <property type="project" value="RGD"/>
</dbReference>
<dbReference type="GO" id="GO:0051216">
    <property type="term" value="P:cartilage development"/>
    <property type="evidence" value="ECO:0000266"/>
    <property type="project" value="RGD"/>
</dbReference>
<dbReference type="GO" id="GO:0007166">
    <property type="term" value="P:cell surface receptor signaling pathway"/>
    <property type="evidence" value="ECO:0000266"/>
    <property type="project" value="RGD"/>
</dbReference>
<dbReference type="GO" id="GO:0007267">
    <property type="term" value="P:cell-cell signaling"/>
    <property type="evidence" value="ECO:0000266"/>
    <property type="project" value="RGD"/>
</dbReference>
<dbReference type="GO" id="GO:0071277">
    <property type="term" value="P:cellular response to calcium ion"/>
    <property type="evidence" value="ECO:0000270"/>
    <property type="project" value="RGD"/>
</dbReference>
<dbReference type="GO" id="GO:0071398">
    <property type="term" value="P:cellular response to fatty acid"/>
    <property type="evidence" value="ECO:0000270"/>
    <property type="project" value="RGD"/>
</dbReference>
<dbReference type="GO" id="GO:0071372">
    <property type="term" value="P:cellular response to follicle-stimulating hormone stimulus"/>
    <property type="evidence" value="ECO:0000266"/>
    <property type="project" value="RGD"/>
</dbReference>
<dbReference type="GO" id="GO:0071385">
    <property type="term" value="P:cellular response to glucocorticoid stimulus"/>
    <property type="evidence" value="ECO:0000270"/>
    <property type="project" value="RGD"/>
</dbReference>
<dbReference type="GO" id="GO:0044751">
    <property type="term" value="P:cellular response to human chorionic gonadotropin stimulus"/>
    <property type="evidence" value="ECO:0000266"/>
    <property type="project" value="RGD"/>
</dbReference>
<dbReference type="GO" id="GO:0070301">
    <property type="term" value="P:cellular response to hydrogen peroxide"/>
    <property type="evidence" value="ECO:0000266"/>
    <property type="project" value="RGD"/>
</dbReference>
<dbReference type="GO" id="GO:0071456">
    <property type="term" value="P:cellular response to hypoxia"/>
    <property type="evidence" value="ECO:0000270"/>
    <property type="project" value="RGD"/>
</dbReference>
<dbReference type="GO" id="GO:0071347">
    <property type="term" value="P:cellular response to interleukin-1"/>
    <property type="evidence" value="ECO:0000270"/>
    <property type="project" value="RGD"/>
</dbReference>
<dbReference type="GO" id="GO:0071373">
    <property type="term" value="P:cellular response to luteinizing hormone stimulus"/>
    <property type="evidence" value="ECO:0000266"/>
    <property type="project" value="RGD"/>
</dbReference>
<dbReference type="GO" id="GO:0071389">
    <property type="term" value="P:cellular response to mineralocorticoid stimulus"/>
    <property type="evidence" value="ECO:0000270"/>
    <property type="project" value="RGD"/>
</dbReference>
<dbReference type="GO" id="GO:0071375">
    <property type="term" value="P:cellular response to peptide hormone stimulus"/>
    <property type="evidence" value="ECO:0000270"/>
    <property type="project" value="RGD"/>
</dbReference>
<dbReference type="GO" id="GO:0097237">
    <property type="term" value="P:cellular response to toxic substance"/>
    <property type="evidence" value="ECO:0000266"/>
    <property type="project" value="RGD"/>
</dbReference>
<dbReference type="GO" id="GO:0071560">
    <property type="term" value="P:cellular response to transforming growth factor beta stimulus"/>
    <property type="evidence" value="ECO:0000270"/>
    <property type="project" value="RGD"/>
</dbReference>
<dbReference type="GO" id="GO:0071356">
    <property type="term" value="P:cellular response to tumor necrosis factor"/>
    <property type="evidence" value="ECO:0000270"/>
    <property type="project" value="RGD"/>
</dbReference>
<dbReference type="GO" id="GO:0071346">
    <property type="term" value="P:cellular response to type II interferon"/>
    <property type="evidence" value="ECO:0000270"/>
    <property type="project" value="RGD"/>
</dbReference>
<dbReference type="GO" id="GO:0071466">
    <property type="term" value="P:cellular response to xenobiotic stimulus"/>
    <property type="evidence" value="ECO:0000270"/>
    <property type="project" value="RGD"/>
</dbReference>
<dbReference type="GO" id="GO:0009953">
    <property type="term" value="P:dorsal/ventral pattern formation"/>
    <property type="evidence" value="ECO:0000266"/>
    <property type="project" value="RGD"/>
</dbReference>
<dbReference type="GO" id="GO:0035050">
    <property type="term" value="P:embryonic heart tube development"/>
    <property type="evidence" value="ECO:0000266"/>
    <property type="project" value="RGD"/>
</dbReference>
<dbReference type="GO" id="GO:0086100">
    <property type="term" value="P:endothelin receptor signaling pathway"/>
    <property type="evidence" value="ECO:0000250"/>
    <property type="project" value="UniProtKB"/>
</dbReference>
<dbReference type="GO" id="GO:0086101">
    <property type="term" value="P:endothelin receptor signaling pathway involved in heart process"/>
    <property type="evidence" value="ECO:0000266"/>
    <property type="project" value="RGD"/>
</dbReference>
<dbReference type="GO" id="GO:0042045">
    <property type="term" value="P:epithelial fluid transport"/>
    <property type="evidence" value="ECO:0000314"/>
    <property type="project" value="RGD"/>
</dbReference>
<dbReference type="GO" id="GO:0070371">
    <property type="term" value="P:ERK1 and ERK2 cascade"/>
    <property type="evidence" value="ECO:0000266"/>
    <property type="project" value="RGD"/>
</dbReference>
<dbReference type="GO" id="GO:0007186">
    <property type="term" value="P:G protein-coupled receptor signaling pathway"/>
    <property type="evidence" value="ECO:0000266"/>
    <property type="project" value="RGD"/>
</dbReference>
<dbReference type="GO" id="GO:0010467">
    <property type="term" value="P:gene expression"/>
    <property type="evidence" value="ECO:0000266"/>
    <property type="project" value="RGD"/>
</dbReference>
<dbReference type="GO" id="GO:0072011">
    <property type="term" value="P:glomerular endothelium development"/>
    <property type="evidence" value="ECO:0000266"/>
    <property type="project" value="RGD"/>
</dbReference>
<dbReference type="GO" id="GO:0003094">
    <property type="term" value="P:glomerular filtration"/>
    <property type="evidence" value="ECO:0000266"/>
    <property type="project" value="RGD"/>
</dbReference>
<dbReference type="GO" id="GO:0007507">
    <property type="term" value="P:heart development"/>
    <property type="evidence" value="ECO:0000266"/>
    <property type="project" value="RGD"/>
</dbReference>
<dbReference type="GO" id="GO:0003015">
    <property type="term" value="P:heart process"/>
    <property type="evidence" value="ECO:0000266"/>
    <property type="project" value="RGD"/>
</dbReference>
<dbReference type="GO" id="GO:0001821">
    <property type="term" value="P:histamine secretion"/>
    <property type="evidence" value="ECO:0000314"/>
    <property type="project" value="RGD"/>
</dbReference>
<dbReference type="GO" id="GO:0001701">
    <property type="term" value="P:in utero embryonic development"/>
    <property type="evidence" value="ECO:0000266"/>
    <property type="project" value="RGD"/>
</dbReference>
<dbReference type="GO" id="GO:0006874">
    <property type="term" value="P:intracellular calcium ion homeostasis"/>
    <property type="evidence" value="ECO:0000266"/>
    <property type="project" value="RGD"/>
</dbReference>
<dbReference type="GO" id="GO:0035556">
    <property type="term" value="P:intracellular signal transduction"/>
    <property type="evidence" value="ECO:0000314"/>
    <property type="project" value="RGD"/>
</dbReference>
<dbReference type="GO" id="GO:0000165">
    <property type="term" value="P:MAPK cascade"/>
    <property type="evidence" value="ECO:0000266"/>
    <property type="project" value="RGD"/>
</dbReference>
<dbReference type="GO" id="GO:0060137">
    <property type="term" value="P:maternal process involved in parturition"/>
    <property type="evidence" value="ECO:0000270"/>
    <property type="project" value="RGD"/>
</dbReference>
<dbReference type="GO" id="GO:1903537">
    <property type="term" value="P:meiotic cell cycle process involved in oocyte maturation"/>
    <property type="evidence" value="ECO:0000266"/>
    <property type="project" value="RGD"/>
</dbReference>
<dbReference type="GO" id="GO:0051899">
    <property type="term" value="P:membrane depolarization"/>
    <property type="evidence" value="ECO:0000315"/>
    <property type="project" value="RGD"/>
</dbReference>
<dbReference type="GO" id="GO:0042474">
    <property type="term" value="P:middle ear morphogenesis"/>
    <property type="evidence" value="ECO:0000266"/>
    <property type="project" value="RGD"/>
</dbReference>
<dbReference type="GO" id="GO:0007005">
    <property type="term" value="P:mitochondrion organization"/>
    <property type="evidence" value="ECO:0000266"/>
    <property type="project" value="RGD"/>
</dbReference>
<dbReference type="GO" id="GO:0010629">
    <property type="term" value="P:negative regulation of gene expression"/>
    <property type="evidence" value="ECO:0000314"/>
    <property type="project" value="BHF-UCL"/>
</dbReference>
<dbReference type="GO" id="GO:0046888">
    <property type="term" value="P:negative regulation of hormone secretion"/>
    <property type="evidence" value="ECO:0000314"/>
    <property type="project" value="RGD"/>
</dbReference>
<dbReference type="GO" id="GO:0160195">
    <property type="term" value="P:negative regulation of phospholipase C/protein kinase C signal transduction"/>
    <property type="evidence" value="ECO:0000266"/>
    <property type="project" value="RGD"/>
</dbReference>
<dbReference type="GO" id="GO:0051248">
    <property type="term" value="P:negative regulation of protein metabolic process"/>
    <property type="evidence" value="ECO:0000266"/>
    <property type="project" value="RGD"/>
</dbReference>
<dbReference type="GO" id="GO:0034392">
    <property type="term" value="P:negative regulation of smooth muscle cell apoptotic process"/>
    <property type="evidence" value="ECO:0000314"/>
    <property type="project" value="RGD"/>
</dbReference>
<dbReference type="GO" id="GO:0000122">
    <property type="term" value="P:negative regulation of transcription by RNA polymerase II"/>
    <property type="evidence" value="ECO:0000266"/>
    <property type="project" value="RGD"/>
</dbReference>
<dbReference type="GO" id="GO:0014032">
    <property type="term" value="P:neural crest cell development"/>
    <property type="evidence" value="ECO:0000266"/>
    <property type="project" value="RGD"/>
</dbReference>
<dbReference type="GO" id="GO:0014033">
    <property type="term" value="P:neural crest cell differentiation"/>
    <property type="evidence" value="ECO:0000266"/>
    <property type="project" value="RGD"/>
</dbReference>
<dbReference type="GO" id="GO:0014034">
    <property type="term" value="P:neural crest cell fate commitment"/>
    <property type="evidence" value="ECO:0000266"/>
    <property type="project" value="RGD"/>
</dbReference>
<dbReference type="GO" id="GO:0031175">
    <property type="term" value="P:neuron projection development"/>
    <property type="evidence" value="ECO:0000266"/>
    <property type="project" value="RGD"/>
</dbReference>
<dbReference type="GO" id="GO:0030185">
    <property type="term" value="P:nitric oxide transport"/>
    <property type="evidence" value="ECO:0000266"/>
    <property type="project" value="RGD"/>
</dbReference>
<dbReference type="GO" id="GO:0003357">
    <property type="term" value="P:noradrenergic neuron differentiation"/>
    <property type="evidence" value="ECO:0000266"/>
    <property type="project" value="RGD"/>
</dbReference>
<dbReference type="GO" id="GO:0030072">
    <property type="term" value="P:peptide hormone secretion"/>
    <property type="evidence" value="ECO:0000266"/>
    <property type="project" value="RGD"/>
</dbReference>
<dbReference type="GO" id="GO:0061626">
    <property type="term" value="P:pharyngeal arch artery morphogenesis"/>
    <property type="evidence" value="ECO:0000266"/>
    <property type="project" value="RGD"/>
</dbReference>
<dbReference type="GO" id="GO:0043491">
    <property type="term" value="P:phosphatidylinositol 3-kinase/protein kinase B signal transduction"/>
    <property type="evidence" value="ECO:0000266"/>
    <property type="project" value="RGD"/>
</dbReference>
<dbReference type="GO" id="GO:0007200">
    <property type="term" value="P:phospholipase C-activating G protein-coupled receptor signaling pathway"/>
    <property type="evidence" value="ECO:0000266"/>
    <property type="project" value="RGD"/>
</dbReference>
<dbReference type="GO" id="GO:0031583">
    <property type="term" value="P:phospholipase D-activating G protein-coupled receptor signaling pathway"/>
    <property type="evidence" value="ECO:0000266"/>
    <property type="project" value="RGD"/>
</dbReference>
<dbReference type="GO" id="GO:0072112">
    <property type="term" value="P:podocyte differentiation"/>
    <property type="evidence" value="ECO:0000266"/>
    <property type="project" value="RGD"/>
</dbReference>
<dbReference type="GO" id="GO:1905653">
    <property type="term" value="P:positive regulation of artery morphogenesis"/>
    <property type="evidence" value="ECO:0000266"/>
    <property type="project" value="RGD"/>
</dbReference>
<dbReference type="GO" id="GO:0050850">
    <property type="term" value="P:positive regulation of calcium-mediated signaling"/>
    <property type="evidence" value="ECO:0000266"/>
    <property type="project" value="RGD"/>
</dbReference>
<dbReference type="GO" id="GO:0043123">
    <property type="term" value="P:positive regulation of canonical NF-kappaB signal transduction"/>
    <property type="evidence" value="ECO:0000266"/>
    <property type="project" value="RGD"/>
</dbReference>
<dbReference type="GO" id="GO:0010613">
    <property type="term" value="P:positive regulation of cardiac muscle hypertrophy"/>
    <property type="evidence" value="ECO:0000266"/>
    <property type="project" value="RGD"/>
</dbReference>
<dbReference type="GO" id="GO:0061051">
    <property type="term" value="P:positive regulation of cell growth involved in cardiac muscle cell development"/>
    <property type="evidence" value="ECO:0000266"/>
    <property type="project" value="RGD"/>
</dbReference>
<dbReference type="GO" id="GO:0030335">
    <property type="term" value="P:positive regulation of cell migration"/>
    <property type="evidence" value="ECO:0000266"/>
    <property type="project" value="RGD"/>
</dbReference>
<dbReference type="GO" id="GO:0008284">
    <property type="term" value="P:positive regulation of cell population proliferation"/>
    <property type="evidence" value="ECO:0000314"/>
    <property type="project" value="RGD"/>
</dbReference>
<dbReference type="GO" id="GO:0045793">
    <property type="term" value="P:positive regulation of cell size"/>
    <property type="evidence" value="ECO:0000266"/>
    <property type="project" value="RGD"/>
</dbReference>
<dbReference type="GO" id="GO:0070101">
    <property type="term" value="P:positive regulation of chemokine-mediated signaling pathway"/>
    <property type="evidence" value="ECO:0000266"/>
    <property type="project" value="RGD"/>
</dbReference>
<dbReference type="GO" id="GO:0007204">
    <property type="term" value="P:positive regulation of cytosolic calcium ion concentration"/>
    <property type="evidence" value="ECO:0000314"/>
    <property type="project" value="RGD"/>
</dbReference>
<dbReference type="GO" id="GO:0010460">
    <property type="term" value="P:positive regulation of heart rate"/>
    <property type="evidence" value="ECO:0000266"/>
    <property type="project" value="RGD"/>
</dbReference>
<dbReference type="GO" id="GO:0046887">
    <property type="term" value="P:positive regulation of hormone secretion"/>
    <property type="evidence" value="ECO:0000266"/>
    <property type="project" value="RGD"/>
</dbReference>
<dbReference type="GO" id="GO:0046330">
    <property type="term" value="P:positive regulation of JNK cascade"/>
    <property type="evidence" value="ECO:0000266"/>
    <property type="project" value="RGD"/>
</dbReference>
<dbReference type="GO" id="GO:0043410">
    <property type="term" value="P:positive regulation of MAPK cascade"/>
    <property type="evidence" value="ECO:0000266"/>
    <property type="project" value="RGD"/>
</dbReference>
<dbReference type="GO" id="GO:0045840">
    <property type="term" value="P:positive regulation of mitotic nuclear division"/>
    <property type="evidence" value="ECO:0000266"/>
    <property type="project" value="RGD"/>
</dbReference>
<dbReference type="GO" id="GO:0090023">
    <property type="term" value="P:positive regulation of neutrophil chemotaxis"/>
    <property type="evidence" value="ECO:0000314"/>
    <property type="project" value="RGD"/>
</dbReference>
<dbReference type="GO" id="GO:1901224">
    <property type="term" value="P:positive regulation of non-canonical NF-kappaB signal transduction"/>
    <property type="evidence" value="ECO:0000314"/>
    <property type="project" value="BHF-UCL"/>
</dbReference>
<dbReference type="GO" id="GO:0042482">
    <property type="term" value="P:positive regulation of odontogenesis"/>
    <property type="evidence" value="ECO:0000314"/>
    <property type="project" value="RGD"/>
</dbReference>
<dbReference type="GO" id="GO:0032308">
    <property type="term" value="P:positive regulation of prostaglandin secretion"/>
    <property type="evidence" value="ECO:0000314"/>
    <property type="project" value="RGD"/>
</dbReference>
<dbReference type="GO" id="GO:1900182">
    <property type="term" value="P:positive regulation of protein localization to nucleus"/>
    <property type="evidence" value="ECO:0000250"/>
    <property type="project" value="UniProtKB"/>
</dbReference>
<dbReference type="GO" id="GO:0035815">
    <property type="term" value="P:positive regulation of renal sodium excretion"/>
    <property type="evidence" value="ECO:0000266"/>
    <property type="project" value="RGD"/>
</dbReference>
<dbReference type="GO" id="GO:0060298">
    <property type="term" value="P:positive regulation of sarcomere organization"/>
    <property type="evidence" value="ECO:0000266"/>
    <property type="project" value="RGD"/>
</dbReference>
<dbReference type="GO" id="GO:0048661">
    <property type="term" value="P:positive regulation of smooth muscle cell proliferation"/>
    <property type="evidence" value="ECO:0000266"/>
    <property type="project" value="RGD"/>
</dbReference>
<dbReference type="GO" id="GO:0045987">
    <property type="term" value="P:positive regulation of smooth muscle contraction"/>
    <property type="evidence" value="ECO:0000314"/>
    <property type="project" value="RGD"/>
</dbReference>
<dbReference type="GO" id="GO:0045944">
    <property type="term" value="P:positive regulation of transcription by RNA polymerase II"/>
    <property type="evidence" value="ECO:0000314"/>
    <property type="project" value="RGD"/>
</dbReference>
<dbReference type="GO" id="GO:0035810">
    <property type="term" value="P:positive regulation of urine volume"/>
    <property type="evidence" value="ECO:0000266"/>
    <property type="project" value="RGD"/>
</dbReference>
<dbReference type="GO" id="GO:1904707">
    <property type="term" value="P:positive regulation of vascular associated smooth muscle cell proliferation"/>
    <property type="evidence" value="ECO:0000314"/>
    <property type="project" value="BHF-UCL"/>
</dbReference>
<dbReference type="GO" id="GO:0001516">
    <property type="term" value="P:prostaglandin biosynthetic process"/>
    <property type="evidence" value="ECO:0000266"/>
    <property type="project" value="RGD"/>
</dbReference>
<dbReference type="GO" id="GO:0008217">
    <property type="term" value="P:regulation of blood pressure"/>
    <property type="evidence" value="ECO:0000315"/>
    <property type="project" value="RGD"/>
</dbReference>
<dbReference type="GO" id="GO:0010827">
    <property type="term" value="P:regulation of D-glucose transmembrane transport"/>
    <property type="evidence" value="ECO:0000266"/>
    <property type="project" value="RGD"/>
</dbReference>
<dbReference type="GO" id="GO:0006885">
    <property type="term" value="P:regulation of pH"/>
    <property type="evidence" value="ECO:0000266"/>
    <property type="project" value="RGD"/>
</dbReference>
<dbReference type="GO" id="GO:0003100">
    <property type="term" value="P:regulation of systemic arterial blood pressure by endothelin"/>
    <property type="evidence" value="ECO:0000266"/>
    <property type="project" value="RGD"/>
</dbReference>
<dbReference type="GO" id="GO:0019229">
    <property type="term" value="P:regulation of vasoconstriction"/>
    <property type="evidence" value="ECO:0007669"/>
    <property type="project" value="InterPro"/>
</dbReference>
<dbReference type="GO" id="GO:0070294">
    <property type="term" value="P:renal sodium ion absorption"/>
    <property type="evidence" value="ECO:0000266"/>
    <property type="project" value="RGD"/>
</dbReference>
<dbReference type="GO" id="GO:0007585">
    <property type="term" value="P:respiratory gaseous exchange by respiratory system"/>
    <property type="evidence" value="ECO:0000266"/>
    <property type="project" value="RGD"/>
</dbReference>
<dbReference type="GO" id="GO:0014823">
    <property type="term" value="P:response to activity"/>
    <property type="evidence" value="ECO:0000270"/>
    <property type="project" value="RGD"/>
</dbReference>
<dbReference type="GO" id="GO:0043200">
    <property type="term" value="P:response to amino acid"/>
    <property type="evidence" value="ECO:0000270"/>
    <property type="project" value="RGD"/>
</dbReference>
<dbReference type="GO" id="GO:0001975">
    <property type="term" value="P:response to amphetamine"/>
    <property type="evidence" value="ECO:0000266"/>
    <property type="project" value="RGD"/>
</dbReference>
<dbReference type="GO" id="GO:0071548">
    <property type="term" value="P:response to dexamethasone"/>
    <property type="evidence" value="ECO:0000270"/>
    <property type="project" value="RGD"/>
</dbReference>
<dbReference type="GO" id="GO:0001666">
    <property type="term" value="P:response to hypoxia"/>
    <property type="evidence" value="ECO:0000270"/>
    <property type="project" value="RGD"/>
</dbReference>
<dbReference type="GO" id="GO:0044321">
    <property type="term" value="P:response to leptin"/>
    <property type="evidence" value="ECO:0000270"/>
    <property type="project" value="RGD"/>
</dbReference>
<dbReference type="GO" id="GO:0032496">
    <property type="term" value="P:response to lipopolysaccharide"/>
    <property type="evidence" value="ECO:0000270"/>
    <property type="project" value="RGD"/>
</dbReference>
<dbReference type="GO" id="GO:0035994">
    <property type="term" value="P:response to muscle stretch"/>
    <property type="evidence" value="ECO:0000270"/>
    <property type="project" value="RGD"/>
</dbReference>
<dbReference type="GO" id="GO:0035094">
    <property type="term" value="P:response to nicotine"/>
    <property type="evidence" value="ECO:0000270"/>
    <property type="project" value="RGD"/>
</dbReference>
<dbReference type="GO" id="GO:0010193">
    <property type="term" value="P:response to ozone"/>
    <property type="evidence" value="ECO:0000270"/>
    <property type="project" value="RGD"/>
</dbReference>
<dbReference type="GO" id="GO:0034696">
    <property type="term" value="P:response to prostaglandin F"/>
    <property type="evidence" value="ECO:0000270"/>
    <property type="project" value="RGD"/>
</dbReference>
<dbReference type="GO" id="GO:1902074">
    <property type="term" value="P:response to salt"/>
    <property type="evidence" value="ECO:0000270"/>
    <property type="project" value="RGD"/>
</dbReference>
<dbReference type="GO" id="GO:0033574">
    <property type="term" value="P:response to testosterone"/>
    <property type="evidence" value="ECO:0000270"/>
    <property type="project" value="RGD"/>
</dbReference>
<dbReference type="GO" id="GO:0071559">
    <property type="term" value="P:response to transforming growth factor beta"/>
    <property type="evidence" value="ECO:0000270"/>
    <property type="project" value="RGD"/>
</dbReference>
<dbReference type="GO" id="GO:0009410">
    <property type="term" value="P:response to xenobiotic stimulus"/>
    <property type="evidence" value="ECO:0000270"/>
    <property type="project" value="RGD"/>
</dbReference>
<dbReference type="GO" id="GO:0043179">
    <property type="term" value="P:rhythmic excitation"/>
    <property type="evidence" value="ECO:0000266"/>
    <property type="project" value="RGD"/>
</dbReference>
<dbReference type="GO" id="GO:1902287">
    <property type="term" value="P:semaphorin-plexin signaling pathway involved in axon guidance"/>
    <property type="evidence" value="ECO:0000266"/>
    <property type="project" value="RGD"/>
</dbReference>
<dbReference type="GO" id="GO:0023019">
    <property type="term" value="P:signal transduction involved in regulation of gene expression"/>
    <property type="evidence" value="ECO:0000266"/>
    <property type="project" value="RGD"/>
</dbReference>
<dbReference type="GO" id="GO:0001501">
    <property type="term" value="P:skeletal system development"/>
    <property type="evidence" value="ECO:0000266"/>
    <property type="project" value="RGD"/>
</dbReference>
<dbReference type="GO" id="GO:0006939">
    <property type="term" value="P:smooth muscle contraction"/>
    <property type="evidence" value="ECO:0000266"/>
    <property type="project" value="RGD"/>
</dbReference>
<dbReference type="GO" id="GO:0042554">
    <property type="term" value="P:superoxide anion generation"/>
    <property type="evidence" value="ECO:0000314"/>
    <property type="project" value="RGD"/>
</dbReference>
<dbReference type="GO" id="GO:0097492">
    <property type="term" value="P:sympathetic neuron axon guidance"/>
    <property type="evidence" value="ECO:0000266"/>
    <property type="project" value="RGD"/>
</dbReference>
<dbReference type="GO" id="GO:0030878">
    <property type="term" value="P:thyroid gland development"/>
    <property type="evidence" value="ECO:0000266"/>
    <property type="project" value="RGD"/>
</dbReference>
<dbReference type="GO" id="GO:0006366">
    <property type="term" value="P:transcription by RNA polymerase II"/>
    <property type="evidence" value="ECO:0000266"/>
    <property type="project" value="RGD"/>
</dbReference>
<dbReference type="GO" id="GO:0042310">
    <property type="term" value="P:vasoconstriction"/>
    <property type="evidence" value="ECO:0000314"/>
    <property type="project" value="RGD"/>
</dbReference>
<dbReference type="GO" id="GO:0014826">
    <property type="term" value="P:vein smooth muscle contraction"/>
    <property type="evidence" value="ECO:0000266"/>
    <property type="project" value="RGD"/>
</dbReference>
<dbReference type="InterPro" id="IPR020475">
    <property type="entry name" value="Endothelin"/>
</dbReference>
<dbReference type="InterPro" id="IPR019764">
    <property type="entry name" value="Endothelin_toxin_CS"/>
</dbReference>
<dbReference type="InterPro" id="IPR001928">
    <property type="entry name" value="Endothln-like_toxin"/>
</dbReference>
<dbReference type="PANTHER" id="PTHR13874">
    <property type="entry name" value="ENDOTHELIN"/>
    <property type="match status" value="1"/>
</dbReference>
<dbReference type="PANTHER" id="PTHR13874:SF10">
    <property type="entry name" value="ENDOTHELIN-1"/>
    <property type="match status" value="1"/>
</dbReference>
<dbReference type="Pfam" id="PF00322">
    <property type="entry name" value="Endothelin"/>
    <property type="match status" value="1"/>
</dbReference>
<dbReference type="PRINTS" id="PR00365">
    <property type="entry name" value="ENDOTHELIN"/>
</dbReference>
<dbReference type="SMART" id="SM00272">
    <property type="entry name" value="END"/>
    <property type="match status" value="2"/>
</dbReference>
<dbReference type="PROSITE" id="PS00270">
    <property type="entry name" value="ENDOTHELIN"/>
    <property type="match status" value="2"/>
</dbReference>
<reference key="1">
    <citation type="journal article" date="1991" name="Biochem. Biophys. Res. Commun.">
        <title>cDNA cloning, sequence analysis and tissue distribution of rat preproendothelin-1 mRNA.</title>
        <authorList>
            <person name="Sakurai T."/>
            <person name="Yanagisawa M."/>
            <person name="Inoue A."/>
            <person name="Ryan U.S."/>
            <person name="Kimura S."/>
            <person name="Mitsui Y."/>
            <person name="Goto K."/>
            <person name="Masaki T."/>
        </authorList>
    </citation>
    <scope>NUCLEOTIDE SEQUENCE [MRNA]</scope>
</reference>
<reference key="2">
    <citation type="journal article" date="1991" name="Biochem. J.">
        <title>Endothelin-1 mRNA expression in the rat kidney.</title>
        <authorList>
            <person name="Nunez D.J.R."/>
            <person name="Taylor E.A."/>
            <person name="Oh V.M.S."/>
            <person name="Schofield J.P."/>
            <person name="Brown M.J."/>
        </authorList>
    </citation>
    <scope>NUCLEOTIDE SEQUENCE [MRNA] OF 51-77</scope>
    <source>
        <strain>Wistar</strain>
        <tissue>Kidney</tissue>
    </source>
</reference>
<reference key="3">
    <citation type="journal article" date="1998" name="Mol. Med.">
        <title>Molecular characterization of a dual endothelin-1/Angiotensin II receptor.</title>
        <authorList>
            <person name="Ruiz-Opazo N."/>
            <person name="Hirayama K."/>
            <person name="Akimoto K."/>
            <person name="Herrera V.L."/>
        </authorList>
    </citation>
    <scope>FUNCTION</scope>
    <source>
        <strain>Sprague-Dawley</strain>
    </source>
</reference>
<reference key="4">
    <citation type="journal article" date="2015" name="J. Proteome Res.">
        <title>Peptidomics for studying limited proteolysis.</title>
        <authorList>
            <person name="Tsuchiya T."/>
            <person name="Osaki T."/>
            <person name="Minamino N."/>
            <person name="Sasaki K."/>
        </authorList>
    </citation>
    <scope>CLEAVAGE OF SIGNAL PEPTIDE AFTER GLY-25</scope>
    <scope>CLEAVAGE OF PROPEPTIDE AFTER SER-50</scope>
    <scope>CLEAVAGE OF BIG ENDOTHELIN-1</scope>
    <scope>IDENTIFICATION BY MASS SPECTROMETRY</scope>
</reference>
<gene>
    <name type="primary">Edn1</name>
</gene>
<proteinExistence type="evidence at protein level"/>
<name>EDN1_RAT</name>
<sequence length="202" mass="23135">MDYFPVIFSLLFVAFQGAPETAVLGAELSPRAEKEVQSPPPSTSWRPRRSKRCSCSSLMDKECVYFCHLDIIWVNTPERVVPYGLGSPSRSKRSLKDLLPTKTTDQGNRCQCAHQKDKKCWNFCQADKELRAQSTMQKGVKDFKKGKPCPKLGKKCIYQQLVEGRKLRRLEAISNSIKTSFRVAKLKAELYRDQKLIHNRAH</sequence>